<feature type="chain" id="PRO_0000318196" description="cAMP-responsive element-binding protein-like 2">
    <location>
        <begin position="1"/>
        <end position="118"/>
    </location>
</feature>
<feature type="domain" description="bZIP">
    <location>
        <begin position="23"/>
        <end position="86"/>
    </location>
</feature>
<feature type="region of interest" description="Disordered" evidence="2">
    <location>
        <begin position="1"/>
        <end position="25"/>
    </location>
</feature>
<feature type="region of interest" description="Basic motif" evidence="1">
    <location>
        <begin position="29"/>
        <end position="60"/>
    </location>
</feature>
<feature type="region of interest" description="Leucine-zipper" evidence="1">
    <location>
        <begin position="62"/>
        <end position="69"/>
    </location>
</feature>
<feature type="compositionally biased region" description="Basic residues" evidence="2">
    <location>
        <begin position="10"/>
        <end position="21"/>
    </location>
</feature>
<comment type="function">
    <text evidence="1">Probable regulator of creb1 transcriptional activity which is involved in adipose cells differentiation. May also play a regulatory role in the cell cycle (By similarity).</text>
</comment>
<comment type="subcellular location">
    <subcellularLocation>
        <location evidence="1">Nucleus</location>
    </subcellularLocation>
</comment>
<comment type="similarity">
    <text evidence="3">Belongs to the bZIP family. ATF subfamily.</text>
</comment>
<protein>
    <recommendedName>
        <fullName>cAMP-responsive element-binding protein-like 2</fullName>
    </recommendedName>
</protein>
<accession>A4IGK3</accession>
<organism>
    <name type="scientific">Xenopus tropicalis</name>
    <name type="common">Western clawed frog</name>
    <name type="synonym">Silurana tropicalis</name>
    <dbReference type="NCBI Taxonomy" id="8364"/>
    <lineage>
        <taxon>Eukaryota</taxon>
        <taxon>Metazoa</taxon>
        <taxon>Chordata</taxon>
        <taxon>Craniata</taxon>
        <taxon>Vertebrata</taxon>
        <taxon>Euteleostomi</taxon>
        <taxon>Amphibia</taxon>
        <taxon>Batrachia</taxon>
        <taxon>Anura</taxon>
        <taxon>Pipoidea</taxon>
        <taxon>Pipidae</taxon>
        <taxon>Xenopodinae</taxon>
        <taxon>Xenopus</taxon>
        <taxon>Silurana</taxon>
    </lineage>
</organism>
<sequence>MDDSKVSGGKVKKPGKRGRKPAKIDLKAKLERSRQSARECRARKKLRYQYLEELVSSRERAICALREELEMYKQWCAAMDQGKIPSEIKALLSGEDLKAAPNQVKHRAVKTEQKEKCP</sequence>
<gene>
    <name type="primary">crebl2</name>
</gene>
<reference key="1">
    <citation type="submission" date="2007-03" db="EMBL/GenBank/DDBJ databases">
        <authorList>
            <consortium name="NIH - Xenopus Gene Collection (XGC) project"/>
        </authorList>
    </citation>
    <scope>NUCLEOTIDE SEQUENCE [LARGE SCALE MRNA]</scope>
    <source>
        <tissue>Embryo</tissue>
    </source>
</reference>
<name>CRBL2_XENTR</name>
<keyword id="KW-0010">Activator</keyword>
<keyword id="KW-0221">Differentiation</keyword>
<keyword id="KW-0238">DNA-binding</keyword>
<keyword id="KW-0539">Nucleus</keyword>
<keyword id="KW-1185">Reference proteome</keyword>
<keyword id="KW-0804">Transcription</keyword>
<keyword id="KW-0805">Transcription regulation</keyword>
<proteinExistence type="inferred from homology"/>
<evidence type="ECO:0000250" key="1"/>
<evidence type="ECO:0000256" key="2">
    <source>
        <dbReference type="SAM" id="MobiDB-lite"/>
    </source>
</evidence>
<evidence type="ECO:0000305" key="3"/>
<dbReference type="EMBL" id="BC135139">
    <property type="protein sequence ID" value="AAI35140.1"/>
    <property type="molecule type" value="mRNA"/>
</dbReference>
<dbReference type="RefSeq" id="NP_001090852.1">
    <property type="nucleotide sequence ID" value="NM_001097383.1"/>
</dbReference>
<dbReference type="SMR" id="A4IGK3"/>
<dbReference type="FunCoup" id="A4IGK3">
    <property type="interactions" value="1359"/>
</dbReference>
<dbReference type="STRING" id="8364.ENSXETP00000022037"/>
<dbReference type="PaxDb" id="8364-ENSXETP00000058036"/>
<dbReference type="DNASU" id="100038265"/>
<dbReference type="GeneID" id="100038265"/>
<dbReference type="KEGG" id="xtr:100038265"/>
<dbReference type="AGR" id="Xenbase:XB-GENE-940117"/>
<dbReference type="CTD" id="1389"/>
<dbReference type="Xenbase" id="XB-GENE-940117">
    <property type="gene designation" value="crebl2"/>
</dbReference>
<dbReference type="eggNOG" id="KOG4515">
    <property type="taxonomic scope" value="Eukaryota"/>
</dbReference>
<dbReference type="HOGENOM" id="CLU_134161_0_0_1"/>
<dbReference type="InParanoid" id="A4IGK3"/>
<dbReference type="OMA" id="DKYYKWN"/>
<dbReference type="OrthoDB" id="5984119at2759"/>
<dbReference type="PhylomeDB" id="A4IGK3"/>
<dbReference type="TreeFam" id="TF323305"/>
<dbReference type="Proteomes" id="UP000008143">
    <property type="component" value="Chromosome 3"/>
</dbReference>
<dbReference type="Bgee" id="ENSXETG00000027934">
    <property type="expression patterns" value="Expressed in testis and 12 other cell types or tissues"/>
</dbReference>
<dbReference type="ExpressionAtlas" id="A4IGK3">
    <property type="expression patterns" value="differential"/>
</dbReference>
<dbReference type="GO" id="GO:0005634">
    <property type="term" value="C:nucleus"/>
    <property type="evidence" value="ECO:0000250"/>
    <property type="project" value="UniProtKB"/>
</dbReference>
<dbReference type="GO" id="GO:0003677">
    <property type="term" value="F:DNA binding"/>
    <property type="evidence" value="ECO:0007669"/>
    <property type="project" value="UniProtKB-KW"/>
</dbReference>
<dbReference type="GO" id="GO:0003700">
    <property type="term" value="F:DNA-binding transcription factor activity"/>
    <property type="evidence" value="ECO:0007669"/>
    <property type="project" value="InterPro"/>
</dbReference>
<dbReference type="GO" id="GO:0030154">
    <property type="term" value="P:cell differentiation"/>
    <property type="evidence" value="ECO:0007669"/>
    <property type="project" value="UniProtKB-KW"/>
</dbReference>
<dbReference type="GO" id="GO:0046326">
    <property type="term" value="P:positive regulation of D-glucose import"/>
    <property type="evidence" value="ECO:0000250"/>
    <property type="project" value="UniProtKB"/>
</dbReference>
<dbReference type="GO" id="GO:0045893">
    <property type="term" value="P:positive regulation of DNA-templated transcription"/>
    <property type="evidence" value="ECO:0000250"/>
    <property type="project" value="UniProtKB"/>
</dbReference>
<dbReference type="GO" id="GO:0045600">
    <property type="term" value="P:positive regulation of fat cell differentiation"/>
    <property type="evidence" value="ECO:0000250"/>
    <property type="project" value="UniProtKB"/>
</dbReference>
<dbReference type="GO" id="GO:0046889">
    <property type="term" value="P:positive regulation of lipid biosynthetic process"/>
    <property type="evidence" value="ECO:0000250"/>
    <property type="project" value="UniProtKB"/>
</dbReference>
<dbReference type="CDD" id="cd14709">
    <property type="entry name" value="bZIP_CREBL2"/>
    <property type="match status" value="1"/>
</dbReference>
<dbReference type="FunFam" id="1.20.5.170:FF:000044">
    <property type="entry name" value="cAMP-responsive element-binding protein-like 2 isoform X2"/>
    <property type="match status" value="1"/>
</dbReference>
<dbReference type="Gene3D" id="1.20.5.170">
    <property type="match status" value="1"/>
</dbReference>
<dbReference type="InterPro" id="IPR004827">
    <property type="entry name" value="bZIP"/>
</dbReference>
<dbReference type="InterPro" id="IPR046347">
    <property type="entry name" value="bZIP_sf"/>
</dbReference>
<dbReference type="InterPro" id="IPR039250">
    <property type="entry name" value="CREBL2/REPTOR-BP"/>
</dbReference>
<dbReference type="PANTHER" id="PTHR21051">
    <property type="entry name" value="CAMP-RESPONSIVE ELEMENT-BINDING PROTEIN-LIKE 2"/>
    <property type="match status" value="1"/>
</dbReference>
<dbReference type="PANTHER" id="PTHR21051:SF4">
    <property type="entry name" value="CAMP-RESPONSIVE ELEMENT-BINDING PROTEIN-LIKE 2"/>
    <property type="match status" value="1"/>
</dbReference>
<dbReference type="Pfam" id="PF07716">
    <property type="entry name" value="bZIP_2"/>
    <property type="match status" value="1"/>
</dbReference>
<dbReference type="SUPFAM" id="SSF57959">
    <property type="entry name" value="Leucine zipper domain"/>
    <property type="match status" value="1"/>
</dbReference>